<comment type="function">
    <text evidence="1">Catalyzes the attachment of serine to tRNA(Ser). Is also able to aminoacylate tRNA(Sec) with serine, to form the misacylated tRNA L-seryl-tRNA(Sec), which will be further converted into selenocysteinyl-tRNA(Sec).</text>
</comment>
<comment type="catalytic activity">
    <reaction evidence="1">
        <text>tRNA(Ser) + L-serine + ATP = L-seryl-tRNA(Ser) + AMP + diphosphate + H(+)</text>
        <dbReference type="Rhea" id="RHEA:12292"/>
        <dbReference type="Rhea" id="RHEA-COMP:9669"/>
        <dbReference type="Rhea" id="RHEA-COMP:9703"/>
        <dbReference type="ChEBI" id="CHEBI:15378"/>
        <dbReference type="ChEBI" id="CHEBI:30616"/>
        <dbReference type="ChEBI" id="CHEBI:33019"/>
        <dbReference type="ChEBI" id="CHEBI:33384"/>
        <dbReference type="ChEBI" id="CHEBI:78442"/>
        <dbReference type="ChEBI" id="CHEBI:78533"/>
        <dbReference type="ChEBI" id="CHEBI:456215"/>
        <dbReference type="EC" id="6.1.1.11"/>
    </reaction>
</comment>
<comment type="catalytic activity">
    <reaction evidence="1">
        <text>tRNA(Sec) + L-serine + ATP = L-seryl-tRNA(Sec) + AMP + diphosphate + H(+)</text>
        <dbReference type="Rhea" id="RHEA:42580"/>
        <dbReference type="Rhea" id="RHEA-COMP:9742"/>
        <dbReference type="Rhea" id="RHEA-COMP:10128"/>
        <dbReference type="ChEBI" id="CHEBI:15378"/>
        <dbReference type="ChEBI" id="CHEBI:30616"/>
        <dbReference type="ChEBI" id="CHEBI:33019"/>
        <dbReference type="ChEBI" id="CHEBI:33384"/>
        <dbReference type="ChEBI" id="CHEBI:78442"/>
        <dbReference type="ChEBI" id="CHEBI:78533"/>
        <dbReference type="ChEBI" id="CHEBI:456215"/>
        <dbReference type="EC" id="6.1.1.11"/>
    </reaction>
</comment>
<comment type="pathway">
    <text evidence="1">Aminoacyl-tRNA biosynthesis; selenocysteinyl-tRNA(Sec) biosynthesis; L-seryl-tRNA(Sec) from L-serine and tRNA(Sec): step 1/1.</text>
</comment>
<comment type="subunit">
    <text evidence="1">Homodimer. The tRNA molecule binds across the dimer.</text>
</comment>
<comment type="subcellular location">
    <subcellularLocation>
        <location evidence="1">Cytoplasm</location>
    </subcellularLocation>
</comment>
<comment type="domain">
    <text evidence="1">Consists of two distinct domains, a catalytic core and a N-terminal extension that is involved in tRNA binding.</text>
</comment>
<comment type="similarity">
    <text evidence="1">Belongs to the class-II aminoacyl-tRNA synthetase family. Type-1 seryl-tRNA synthetase subfamily.</text>
</comment>
<organism>
    <name type="scientific">Cupriavidus necator (strain ATCC 17699 / DSM 428 / KCTC 22496 / NCIMB 10442 / H16 / Stanier 337)</name>
    <name type="common">Ralstonia eutropha</name>
    <dbReference type="NCBI Taxonomy" id="381666"/>
    <lineage>
        <taxon>Bacteria</taxon>
        <taxon>Pseudomonadati</taxon>
        <taxon>Pseudomonadota</taxon>
        <taxon>Betaproteobacteria</taxon>
        <taxon>Burkholderiales</taxon>
        <taxon>Burkholderiaceae</taxon>
        <taxon>Cupriavidus</taxon>
    </lineage>
</organism>
<accession>Q0KDK9</accession>
<keyword id="KW-0030">Aminoacyl-tRNA synthetase</keyword>
<keyword id="KW-0067">ATP-binding</keyword>
<keyword id="KW-0963">Cytoplasm</keyword>
<keyword id="KW-0436">Ligase</keyword>
<keyword id="KW-0547">Nucleotide-binding</keyword>
<keyword id="KW-0648">Protein biosynthesis</keyword>
<keyword id="KW-1185">Reference proteome</keyword>
<feature type="chain" id="PRO_1000019787" description="Serine--tRNA ligase">
    <location>
        <begin position="1"/>
        <end position="434"/>
    </location>
</feature>
<feature type="binding site" evidence="1">
    <location>
        <begin position="239"/>
        <end position="241"/>
    </location>
    <ligand>
        <name>L-serine</name>
        <dbReference type="ChEBI" id="CHEBI:33384"/>
    </ligand>
</feature>
<feature type="binding site" evidence="1">
    <location>
        <begin position="270"/>
        <end position="272"/>
    </location>
    <ligand>
        <name>ATP</name>
        <dbReference type="ChEBI" id="CHEBI:30616"/>
    </ligand>
</feature>
<feature type="binding site" evidence="1">
    <location>
        <position position="293"/>
    </location>
    <ligand>
        <name>L-serine</name>
        <dbReference type="ChEBI" id="CHEBI:33384"/>
    </ligand>
</feature>
<feature type="binding site" evidence="1">
    <location>
        <begin position="357"/>
        <end position="360"/>
    </location>
    <ligand>
        <name>ATP</name>
        <dbReference type="ChEBI" id="CHEBI:30616"/>
    </ligand>
</feature>
<feature type="binding site" evidence="1">
    <location>
        <position position="392"/>
    </location>
    <ligand>
        <name>L-serine</name>
        <dbReference type="ChEBI" id="CHEBI:33384"/>
    </ligand>
</feature>
<dbReference type="EC" id="6.1.1.11" evidence="1"/>
<dbReference type="EMBL" id="AM260479">
    <property type="protein sequence ID" value="CAJ91912.1"/>
    <property type="molecule type" value="Genomic_DNA"/>
</dbReference>
<dbReference type="RefSeq" id="WP_011614683.1">
    <property type="nucleotide sequence ID" value="NC_008313.1"/>
</dbReference>
<dbReference type="SMR" id="Q0KDK9"/>
<dbReference type="STRING" id="381666.H16_A0764"/>
<dbReference type="KEGG" id="reh:H16_A0764"/>
<dbReference type="PATRIC" id="fig|381666.6.peg.1137"/>
<dbReference type="eggNOG" id="COG0172">
    <property type="taxonomic scope" value="Bacteria"/>
</dbReference>
<dbReference type="HOGENOM" id="CLU_023797_1_1_4"/>
<dbReference type="OrthoDB" id="9804647at2"/>
<dbReference type="UniPathway" id="UPA00906">
    <property type="reaction ID" value="UER00895"/>
</dbReference>
<dbReference type="Proteomes" id="UP000008210">
    <property type="component" value="Chromosome 1"/>
</dbReference>
<dbReference type="GO" id="GO:0005737">
    <property type="term" value="C:cytoplasm"/>
    <property type="evidence" value="ECO:0007669"/>
    <property type="project" value="UniProtKB-SubCell"/>
</dbReference>
<dbReference type="GO" id="GO:0005524">
    <property type="term" value="F:ATP binding"/>
    <property type="evidence" value="ECO:0007669"/>
    <property type="project" value="UniProtKB-UniRule"/>
</dbReference>
<dbReference type="GO" id="GO:0004828">
    <property type="term" value="F:serine-tRNA ligase activity"/>
    <property type="evidence" value="ECO:0007669"/>
    <property type="project" value="UniProtKB-UniRule"/>
</dbReference>
<dbReference type="GO" id="GO:0016260">
    <property type="term" value="P:selenocysteine biosynthetic process"/>
    <property type="evidence" value="ECO:0007669"/>
    <property type="project" value="UniProtKB-UniRule"/>
</dbReference>
<dbReference type="GO" id="GO:0006434">
    <property type="term" value="P:seryl-tRNA aminoacylation"/>
    <property type="evidence" value="ECO:0007669"/>
    <property type="project" value="UniProtKB-UniRule"/>
</dbReference>
<dbReference type="CDD" id="cd00770">
    <property type="entry name" value="SerRS_core"/>
    <property type="match status" value="1"/>
</dbReference>
<dbReference type="Gene3D" id="3.30.930.10">
    <property type="entry name" value="Bira Bifunctional Protein, Domain 2"/>
    <property type="match status" value="1"/>
</dbReference>
<dbReference type="Gene3D" id="1.10.287.40">
    <property type="entry name" value="Serine-tRNA synthetase, tRNA binding domain"/>
    <property type="match status" value="1"/>
</dbReference>
<dbReference type="HAMAP" id="MF_00176">
    <property type="entry name" value="Ser_tRNA_synth_type1"/>
    <property type="match status" value="1"/>
</dbReference>
<dbReference type="InterPro" id="IPR002314">
    <property type="entry name" value="aa-tRNA-synt_IIb"/>
</dbReference>
<dbReference type="InterPro" id="IPR006195">
    <property type="entry name" value="aa-tRNA-synth_II"/>
</dbReference>
<dbReference type="InterPro" id="IPR045864">
    <property type="entry name" value="aa-tRNA-synth_II/BPL/LPL"/>
</dbReference>
<dbReference type="InterPro" id="IPR002317">
    <property type="entry name" value="Ser-tRNA-ligase_type_1"/>
</dbReference>
<dbReference type="InterPro" id="IPR015866">
    <property type="entry name" value="Ser-tRNA-synth_1_N"/>
</dbReference>
<dbReference type="InterPro" id="IPR042103">
    <property type="entry name" value="SerRS_1_N_sf"/>
</dbReference>
<dbReference type="InterPro" id="IPR033729">
    <property type="entry name" value="SerRS_core"/>
</dbReference>
<dbReference type="InterPro" id="IPR010978">
    <property type="entry name" value="tRNA-bd_arm"/>
</dbReference>
<dbReference type="NCBIfam" id="TIGR00414">
    <property type="entry name" value="serS"/>
    <property type="match status" value="1"/>
</dbReference>
<dbReference type="PANTHER" id="PTHR43697:SF1">
    <property type="entry name" value="SERINE--TRNA LIGASE"/>
    <property type="match status" value="1"/>
</dbReference>
<dbReference type="PANTHER" id="PTHR43697">
    <property type="entry name" value="SERYL-TRNA SYNTHETASE"/>
    <property type="match status" value="1"/>
</dbReference>
<dbReference type="Pfam" id="PF02403">
    <property type="entry name" value="Seryl_tRNA_N"/>
    <property type="match status" value="1"/>
</dbReference>
<dbReference type="Pfam" id="PF00587">
    <property type="entry name" value="tRNA-synt_2b"/>
    <property type="match status" value="1"/>
</dbReference>
<dbReference type="PIRSF" id="PIRSF001529">
    <property type="entry name" value="Ser-tRNA-synth_IIa"/>
    <property type="match status" value="1"/>
</dbReference>
<dbReference type="PRINTS" id="PR00981">
    <property type="entry name" value="TRNASYNTHSER"/>
</dbReference>
<dbReference type="SUPFAM" id="SSF55681">
    <property type="entry name" value="Class II aaRS and biotin synthetases"/>
    <property type="match status" value="1"/>
</dbReference>
<dbReference type="SUPFAM" id="SSF46589">
    <property type="entry name" value="tRNA-binding arm"/>
    <property type="match status" value="1"/>
</dbReference>
<dbReference type="PROSITE" id="PS50862">
    <property type="entry name" value="AA_TRNA_LIGASE_II"/>
    <property type="match status" value="1"/>
</dbReference>
<name>SYS_CUPNH</name>
<proteinExistence type="inferred from homology"/>
<gene>
    <name evidence="1" type="primary">serS</name>
    <name type="ordered locus">H16_A0764</name>
</gene>
<protein>
    <recommendedName>
        <fullName evidence="1">Serine--tRNA ligase</fullName>
        <ecNumber evidence="1">6.1.1.11</ecNumber>
    </recommendedName>
    <alternativeName>
        <fullName evidence="1">Seryl-tRNA synthetase</fullName>
        <shortName evidence="1">SerRS</shortName>
    </alternativeName>
    <alternativeName>
        <fullName evidence="1">Seryl-tRNA(Ser/Sec) synthetase</fullName>
    </alternativeName>
</protein>
<reference key="1">
    <citation type="journal article" date="2006" name="Nat. Biotechnol.">
        <title>Genome sequence of the bioplastic-producing 'Knallgas' bacterium Ralstonia eutropha H16.</title>
        <authorList>
            <person name="Pohlmann A."/>
            <person name="Fricke W.F."/>
            <person name="Reinecke F."/>
            <person name="Kusian B."/>
            <person name="Liesegang H."/>
            <person name="Cramm R."/>
            <person name="Eitinger T."/>
            <person name="Ewering C."/>
            <person name="Poetter M."/>
            <person name="Schwartz E."/>
            <person name="Strittmatter A."/>
            <person name="Voss I."/>
            <person name="Gottschalk G."/>
            <person name="Steinbuechel A."/>
            <person name="Friedrich B."/>
            <person name="Bowien B."/>
        </authorList>
    </citation>
    <scope>NUCLEOTIDE SEQUENCE [LARGE SCALE GENOMIC DNA]</scope>
    <source>
        <strain>ATCC 17699 / DSM 428 / KCTC 22496 / NCIMB 10442 / H16 / Stanier 337</strain>
    </source>
</reference>
<evidence type="ECO:0000255" key="1">
    <source>
        <dbReference type="HAMAP-Rule" id="MF_00176"/>
    </source>
</evidence>
<sequence>MLDIQLFRKDIDAVAQRLATRGYQLDVAAFQALEAERKQLQTQTEELQARRNSLSKQIGMLKGKGEDASAVMAEVGGIGDTLKASAARLDEIQAHLAELMLAIPNLPHESVPVGNDETQNVEVRRVGEPRQFDFAVRDHVDVGDKLGLDFDTAVKVTGSRFSMLRGGLARMNRALVQLMLDTHTQEHGYTEMYVPYMVNAASMRGTGQLPKFEEDLFKVPRKVGSEDGERIENFYLIPTAEVPLTNIVRDAIVAGEKLPLRFVAHTPCFRSEAGSYGKDTRGMIRQHQFDKVELVQVVPAAQSFEALEQLTGHAEAILKKLELPFRTIVLCTGDMGFGSTKTYDLEVWIPAQNTYREISSCSNMGDFQARRMQARMRAGQGKPELVHTLNGSGLAVGRTLVAILENYQNADGSVTVPAALQPYMGGITRLEPEM</sequence>